<proteinExistence type="inferred from homology"/>
<gene>
    <name evidence="1" type="primary">uppP</name>
    <name type="synonym">bacA</name>
    <name type="synonym">upk</name>
    <name type="ordered locus">blr0716</name>
</gene>
<name>UPPP_BRADU</name>
<feature type="chain" id="PRO_0000151118" description="Undecaprenyl-diphosphatase">
    <location>
        <begin position="1"/>
        <end position="268"/>
    </location>
</feature>
<feature type="transmembrane region" description="Helical" evidence="1">
    <location>
        <begin position="8"/>
        <end position="28"/>
    </location>
</feature>
<feature type="transmembrane region" description="Helical" evidence="1">
    <location>
        <begin position="41"/>
        <end position="61"/>
    </location>
</feature>
<feature type="transmembrane region" description="Helical" evidence="1">
    <location>
        <begin position="83"/>
        <end position="103"/>
    </location>
</feature>
<feature type="transmembrane region" description="Helical" evidence="1">
    <location>
        <begin position="108"/>
        <end position="128"/>
    </location>
</feature>
<feature type="transmembrane region" description="Helical" evidence="1">
    <location>
        <begin position="144"/>
        <end position="164"/>
    </location>
</feature>
<feature type="transmembrane region" description="Helical" evidence="1">
    <location>
        <begin position="184"/>
        <end position="204"/>
    </location>
</feature>
<feature type="transmembrane region" description="Helical" evidence="1">
    <location>
        <begin position="218"/>
        <end position="238"/>
    </location>
</feature>
<feature type="transmembrane region" description="Helical" evidence="1">
    <location>
        <begin position="246"/>
        <end position="266"/>
    </location>
</feature>
<organism>
    <name type="scientific">Bradyrhizobium diazoefficiens (strain JCM 10833 / BCRC 13528 / IAM 13628 / NBRC 14792 / USDA 110)</name>
    <dbReference type="NCBI Taxonomy" id="224911"/>
    <lineage>
        <taxon>Bacteria</taxon>
        <taxon>Pseudomonadati</taxon>
        <taxon>Pseudomonadota</taxon>
        <taxon>Alphaproteobacteria</taxon>
        <taxon>Hyphomicrobiales</taxon>
        <taxon>Nitrobacteraceae</taxon>
        <taxon>Bradyrhizobium</taxon>
    </lineage>
</organism>
<keyword id="KW-0046">Antibiotic resistance</keyword>
<keyword id="KW-0997">Cell inner membrane</keyword>
<keyword id="KW-1003">Cell membrane</keyword>
<keyword id="KW-0133">Cell shape</keyword>
<keyword id="KW-0961">Cell wall biogenesis/degradation</keyword>
<keyword id="KW-0378">Hydrolase</keyword>
<keyword id="KW-0472">Membrane</keyword>
<keyword id="KW-0573">Peptidoglycan synthesis</keyword>
<keyword id="KW-1185">Reference proteome</keyword>
<keyword id="KW-0812">Transmembrane</keyword>
<keyword id="KW-1133">Transmembrane helix</keyword>
<reference key="1">
    <citation type="journal article" date="2002" name="DNA Res.">
        <title>Complete genomic sequence of nitrogen-fixing symbiotic bacterium Bradyrhizobium japonicum USDA110.</title>
        <authorList>
            <person name="Kaneko T."/>
            <person name="Nakamura Y."/>
            <person name="Sato S."/>
            <person name="Minamisawa K."/>
            <person name="Uchiumi T."/>
            <person name="Sasamoto S."/>
            <person name="Watanabe A."/>
            <person name="Idesawa K."/>
            <person name="Iriguchi M."/>
            <person name="Kawashima K."/>
            <person name="Kohara M."/>
            <person name="Matsumoto M."/>
            <person name="Shimpo S."/>
            <person name="Tsuruoka H."/>
            <person name="Wada T."/>
            <person name="Yamada M."/>
            <person name="Tabata S."/>
        </authorList>
    </citation>
    <scope>NUCLEOTIDE SEQUENCE [LARGE SCALE GENOMIC DNA]</scope>
    <source>
        <strain>JCM 10833 / BCRC 13528 / IAM 13628 / NBRC 14792 / USDA 110</strain>
    </source>
</reference>
<protein>
    <recommendedName>
        <fullName evidence="1">Undecaprenyl-diphosphatase</fullName>
        <ecNumber evidence="1">3.6.1.27</ecNumber>
    </recommendedName>
    <alternativeName>
        <fullName evidence="1">Bacitracin resistance protein</fullName>
    </alternativeName>
    <alternativeName>
        <fullName evidence="1">Undecaprenyl pyrophosphate phosphatase</fullName>
    </alternativeName>
</protein>
<dbReference type="EC" id="3.6.1.27" evidence="1"/>
<dbReference type="EMBL" id="BA000040">
    <property type="protein sequence ID" value="BAC45981.1"/>
    <property type="molecule type" value="Genomic_DNA"/>
</dbReference>
<dbReference type="RefSeq" id="NP_767356.1">
    <property type="nucleotide sequence ID" value="NC_004463.1"/>
</dbReference>
<dbReference type="RefSeq" id="WP_011083541.1">
    <property type="nucleotide sequence ID" value="NC_004463.1"/>
</dbReference>
<dbReference type="SMR" id="Q89WH1"/>
<dbReference type="FunCoup" id="Q89WH1">
    <property type="interactions" value="447"/>
</dbReference>
<dbReference type="STRING" id="224911.AAV28_00420"/>
<dbReference type="EnsemblBacteria" id="BAC45981">
    <property type="protein sequence ID" value="BAC45981"/>
    <property type="gene ID" value="BAC45981"/>
</dbReference>
<dbReference type="GeneID" id="46487990"/>
<dbReference type="KEGG" id="bja:blr0716"/>
<dbReference type="PATRIC" id="fig|224911.44.peg.88"/>
<dbReference type="eggNOG" id="COG1968">
    <property type="taxonomic scope" value="Bacteria"/>
</dbReference>
<dbReference type="HOGENOM" id="CLU_060296_2_0_5"/>
<dbReference type="InParanoid" id="Q89WH1"/>
<dbReference type="OrthoDB" id="9808289at2"/>
<dbReference type="PhylomeDB" id="Q89WH1"/>
<dbReference type="Proteomes" id="UP000002526">
    <property type="component" value="Chromosome"/>
</dbReference>
<dbReference type="GO" id="GO:0005886">
    <property type="term" value="C:plasma membrane"/>
    <property type="evidence" value="ECO:0000318"/>
    <property type="project" value="GO_Central"/>
</dbReference>
<dbReference type="GO" id="GO:0050380">
    <property type="term" value="F:undecaprenyl-diphosphatase activity"/>
    <property type="evidence" value="ECO:0000318"/>
    <property type="project" value="GO_Central"/>
</dbReference>
<dbReference type="GO" id="GO:0071555">
    <property type="term" value="P:cell wall organization"/>
    <property type="evidence" value="ECO:0007669"/>
    <property type="project" value="UniProtKB-KW"/>
</dbReference>
<dbReference type="GO" id="GO:0009252">
    <property type="term" value="P:peptidoglycan biosynthetic process"/>
    <property type="evidence" value="ECO:0007669"/>
    <property type="project" value="UniProtKB-KW"/>
</dbReference>
<dbReference type="GO" id="GO:0000270">
    <property type="term" value="P:peptidoglycan metabolic process"/>
    <property type="evidence" value="ECO:0000318"/>
    <property type="project" value="GO_Central"/>
</dbReference>
<dbReference type="GO" id="GO:0008360">
    <property type="term" value="P:regulation of cell shape"/>
    <property type="evidence" value="ECO:0007669"/>
    <property type="project" value="UniProtKB-KW"/>
</dbReference>
<dbReference type="GO" id="GO:0046677">
    <property type="term" value="P:response to antibiotic"/>
    <property type="evidence" value="ECO:0007669"/>
    <property type="project" value="UniProtKB-UniRule"/>
</dbReference>
<dbReference type="HAMAP" id="MF_01006">
    <property type="entry name" value="Undec_diphosphatase"/>
    <property type="match status" value="1"/>
</dbReference>
<dbReference type="InterPro" id="IPR003824">
    <property type="entry name" value="UppP"/>
</dbReference>
<dbReference type="NCBIfam" id="NF001389">
    <property type="entry name" value="PRK00281.1-2"/>
    <property type="match status" value="1"/>
</dbReference>
<dbReference type="NCBIfam" id="NF001390">
    <property type="entry name" value="PRK00281.1-4"/>
    <property type="match status" value="1"/>
</dbReference>
<dbReference type="NCBIfam" id="TIGR00753">
    <property type="entry name" value="undec_PP_bacA"/>
    <property type="match status" value="1"/>
</dbReference>
<dbReference type="PANTHER" id="PTHR30622">
    <property type="entry name" value="UNDECAPRENYL-DIPHOSPHATASE"/>
    <property type="match status" value="1"/>
</dbReference>
<dbReference type="PANTHER" id="PTHR30622:SF3">
    <property type="entry name" value="UNDECAPRENYL-DIPHOSPHATASE"/>
    <property type="match status" value="1"/>
</dbReference>
<dbReference type="Pfam" id="PF02673">
    <property type="entry name" value="BacA"/>
    <property type="match status" value="1"/>
</dbReference>
<comment type="function">
    <text evidence="1">Catalyzes the dephosphorylation of undecaprenyl diphosphate (UPP). Confers resistance to bacitracin.</text>
</comment>
<comment type="catalytic activity">
    <reaction evidence="1">
        <text>di-trans,octa-cis-undecaprenyl diphosphate + H2O = di-trans,octa-cis-undecaprenyl phosphate + phosphate + H(+)</text>
        <dbReference type="Rhea" id="RHEA:28094"/>
        <dbReference type="ChEBI" id="CHEBI:15377"/>
        <dbReference type="ChEBI" id="CHEBI:15378"/>
        <dbReference type="ChEBI" id="CHEBI:43474"/>
        <dbReference type="ChEBI" id="CHEBI:58405"/>
        <dbReference type="ChEBI" id="CHEBI:60392"/>
        <dbReference type="EC" id="3.6.1.27"/>
    </reaction>
</comment>
<comment type="subcellular location">
    <subcellularLocation>
        <location evidence="1">Cell inner membrane</location>
        <topology evidence="1">Multi-pass membrane protein</topology>
    </subcellularLocation>
</comment>
<comment type="miscellaneous">
    <text>Bacitracin is thought to be involved in the inhibition of peptidoglycan synthesis by sequestering undecaprenyl diphosphate, thereby reducing the pool of lipid carrier available.</text>
</comment>
<comment type="similarity">
    <text evidence="1">Belongs to the UppP family.</text>
</comment>
<evidence type="ECO:0000255" key="1">
    <source>
        <dbReference type="HAMAP-Rule" id="MF_01006"/>
    </source>
</evidence>
<sequence>MSDAIRAVILGIIEGVTEFLPVSSTGHLLLAERFFHLGEGAFWDSFTVLIQLGAILAIVGLYFKKLWDVVIGFFTGDTYSRRFVIGVLVAFLPAVVVGLVAGKYIKSVLFNPWVVCFTLIVGGAILLWVDKLDLKPREHDATRFPLLMYLYIGIAQCVAMIPGVSRSGASIVAAMLLGADKRAAAEFSFFLAIPTMIGAFAYDFYKNRSEMTMDHMGIVAIGFVVSFITAVIVVKTFLTYVTRHGFVVFAWWRVIVGTLGLIALALGR</sequence>
<accession>Q89WH1</accession>